<feature type="chain" id="PRO_0000299559" description="Dedicator of cytokinesis protein 11">
    <location>
        <begin position="1"/>
        <end position="2073"/>
    </location>
</feature>
<feature type="domain" description="PH" evidence="2">
    <location>
        <begin position="165"/>
        <end position="272"/>
    </location>
</feature>
<feature type="domain" description="C2 DOCK-type" evidence="3">
    <location>
        <begin position="640"/>
        <end position="818"/>
    </location>
</feature>
<feature type="domain" description="DOCKER" evidence="4">
    <location>
        <begin position="1609"/>
        <end position="2036"/>
    </location>
</feature>
<feature type="region of interest" description="Disordered" evidence="5">
    <location>
        <begin position="1227"/>
        <end position="1267"/>
    </location>
</feature>
<feature type="compositionally biased region" description="Low complexity" evidence="5">
    <location>
        <begin position="1254"/>
        <end position="1267"/>
    </location>
</feature>
<feature type="modified residue" description="Phosphoserine" evidence="1">
    <location>
        <position position="12"/>
    </location>
</feature>
<feature type="modified residue" description="Phosphothreonine" evidence="1">
    <location>
        <position position="16"/>
    </location>
</feature>
<feature type="modified residue" description="Phosphoserine" evidence="1">
    <location>
        <position position="23"/>
    </location>
</feature>
<feature type="modified residue" description="Phosphoserine" evidence="1">
    <location>
        <position position="161"/>
    </location>
</feature>
<feature type="modified residue" description="Phosphotyrosine" evidence="1">
    <location>
        <position position="248"/>
    </location>
</feature>
<feature type="modified residue" description="Phosphoserine" evidence="1">
    <location>
        <position position="306"/>
    </location>
</feature>
<feature type="modified residue" description="Phosphoserine" evidence="14">
    <location>
        <position position="445"/>
    </location>
</feature>
<feature type="modified residue" description="Phosphoserine" evidence="1">
    <location>
        <position position="1237"/>
    </location>
</feature>
<feature type="modified residue" description="Phosphoserine" evidence="1">
    <location>
        <position position="1240"/>
    </location>
</feature>
<feature type="sequence conflict" description="In Ref. 1; BAD83670." evidence="12" ref="1">
    <original>A</original>
    <variation>T</variation>
    <location>
        <position position="1608"/>
    </location>
</feature>
<dbReference type="EMBL" id="AB116935">
    <property type="protein sequence ID" value="BAD83670.1"/>
    <property type="molecule type" value="mRNA"/>
</dbReference>
<dbReference type="EMBL" id="AL672023">
    <property type="status" value="NOT_ANNOTATED_CDS"/>
    <property type="molecule type" value="Genomic_DNA"/>
</dbReference>
<dbReference type="EMBL" id="AL672038">
    <property type="status" value="NOT_ANNOTATED_CDS"/>
    <property type="molecule type" value="Genomic_DNA"/>
</dbReference>
<dbReference type="CCDS" id="CCDS40923.1"/>
<dbReference type="RefSeq" id="NP_001009947.2">
    <property type="nucleotide sequence ID" value="NM_001009947.3"/>
</dbReference>
<dbReference type="SMR" id="A2AF47"/>
<dbReference type="BioGRID" id="217880">
    <property type="interactions" value="18"/>
</dbReference>
<dbReference type="FunCoup" id="A2AF47">
    <property type="interactions" value="298"/>
</dbReference>
<dbReference type="IntAct" id="A2AF47">
    <property type="interactions" value="2"/>
</dbReference>
<dbReference type="MINT" id="A2AF47"/>
<dbReference type="STRING" id="10090.ENSMUSP00000033419"/>
<dbReference type="iPTMnet" id="A2AF47"/>
<dbReference type="PhosphoSitePlus" id="A2AF47"/>
<dbReference type="jPOST" id="A2AF47"/>
<dbReference type="PaxDb" id="10090-ENSMUSP00000033419"/>
<dbReference type="PeptideAtlas" id="A2AF47"/>
<dbReference type="ProteomicsDB" id="279794"/>
<dbReference type="Pumba" id="A2AF47"/>
<dbReference type="Antibodypedia" id="29701">
    <property type="antibodies" value="53 antibodies from 17 providers"/>
</dbReference>
<dbReference type="Ensembl" id="ENSMUST00000033419.13">
    <property type="protein sequence ID" value="ENSMUSP00000033419.6"/>
    <property type="gene ID" value="ENSMUSG00000031093.15"/>
</dbReference>
<dbReference type="GeneID" id="75974"/>
<dbReference type="KEGG" id="mmu:75974"/>
<dbReference type="UCSC" id="uc009sxi.1">
    <property type="organism name" value="mouse"/>
</dbReference>
<dbReference type="AGR" id="MGI:1923224"/>
<dbReference type="CTD" id="139818"/>
<dbReference type="MGI" id="MGI:1923224">
    <property type="gene designation" value="Dock11"/>
</dbReference>
<dbReference type="VEuPathDB" id="HostDB:ENSMUSG00000031093"/>
<dbReference type="eggNOG" id="KOG1997">
    <property type="taxonomic scope" value="Eukaryota"/>
</dbReference>
<dbReference type="GeneTree" id="ENSGT00940000155658"/>
<dbReference type="InParanoid" id="A2AF47"/>
<dbReference type="OMA" id="IAVCMEF"/>
<dbReference type="OrthoDB" id="47328at2759"/>
<dbReference type="PhylomeDB" id="A2AF47"/>
<dbReference type="TreeFam" id="TF313629"/>
<dbReference type="Reactome" id="R-MMU-9013148">
    <property type="pathway name" value="CDC42 GTPase cycle"/>
</dbReference>
<dbReference type="Reactome" id="R-MMU-9013149">
    <property type="pathway name" value="RAC1 GTPase cycle"/>
</dbReference>
<dbReference type="Reactome" id="R-MMU-983231">
    <property type="pathway name" value="Factors involved in megakaryocyte development and platelet production"/>
</dbReference>
<dbReference type="BioGRID-ORCS" id="75974">
    <property type="hits" value="3 hits in 76 CRISPR screens"/>
</dbReference>
<dbReference type="ChiTaRS" id="Dock11">
    <property type="organism name" value="mouse"/>
</dbReference>
<dbReference type="PRO" id="PR:A2AF47"/>
<dbReference type="Proteomes" id="UP000000589">
    <property type="component" value="Chromosome X"/>
</dbReference>
<dbReference type="RNAct" id="A2AF47">
    <property type="molecule type" value="protein"/>
</dbReference>
<dbReference type="Bgee" id="ENSMUSG00000031093">
    <property type="expression patterns" value="Expressed in manus and 224 other cell types or tissues"/>
</dbReference>
<dbReference type="ExpressionAtlas" id="A2AF47">
    <property type="expression patterns" value="baseline and differential"/>
</dbReference>
<dbReference type="GO" id="GO:0005085">
    <property type="term" value="F:guanyl-nucleotide exchange factor activity"/>
    <property type="evidence" value="ECO:0000314"/>
    <property type="project" value="UniProtKB"/>
</dbReference>
<dbReference type="GO" id="GO:0031267">
    <property type="term" value="F:small GTPase binding"/>
    <property type="evidence" value="ECO:0000353"/>
    <property type="project" value="MGI"/>
</dbReference>
<dbReference type="GO" id="GO:0001782">
    <property type="term" value="P:B cell homeostasis"/>
    <property type="evidence" value="ECO:0000315"/>
    <property type="project" value="UniProtKB"/>
</dbReference>
<dbReference type="GO" id="GO:0002315">
    <property type="term" value="P:marginal zone B cell differentiation"/>
    <property type="evidence" value="ECO:0000315"/>
    <property type="project" value="UniProtKB"/>
</dbReference>
<dbReference type="GO" id="GO:0051491">
    <property type="term" value="P:positive regulation of filopodium assembly"/>
    <property type="evidence" value="ECO:0000315"/>
    <property type="project" value="UniProtKB"/>
</dbReference>
<dbReference type="GO" id="GO:0043547">
    <property type="term" value="P:positive regulation of GTPase activity"/>
    <property type="evidence" value="ECO:0000314"/>
    <property type="project" value="UniProtKB"/>
</dbReference>
<dbReference type="GO" id="GO:0007264">
    <property type="term" value="P:small GTPase-mediated signal transduction"/>
    <property type="evidence" value="ECO:0007669"/>
    <property type="project" value="InterPro"/>
</dbReference>
<dbReference type="CDD" id="cd08697">
    <property type="entry name" value="C2_Dock-D"/>
    <property type="match status" value="1"/>
</dbReference>
<dbReference type="CDD" id="cd11700">
    <property type="entry name" value="DHR2_DOCK11"/>
    <property type="match status" value="1"/>
</dbReference>
<dbReference type="CDD" id="cd13267">
    <property type="entry name" value="PH_DOCK-D"/>
    <property type="match status" value="1"/>
</dbReference>
<dbReference type="FunFam" id="1.20.58.740:FF:000001">
    <property type="entry name" value="dedicator of cytokinesis protein 9 isoform X1"/>
    <property type="match status" value="1"/>
</dbReference>
<dbReference type="FunFam" id="2.30.29.30:FF:000016">
    <property type="entry name" value="dedicator of cytokinesis protein 9 isoform X1"/>
    <property type="match status" value="1"/>
</dbReference>
<dbReference type="FunFam" id="2.60.40.150:FF:000015">
    <property type="entry name" value="dedicator of cytokinesis protein 9 isoform X1"/>
    <property type="match status" value="1"/>
</dbReference>
<dbReference type="FunFam" id="1.25.40.410:FF:000001">
    <property type="entry name" value="dedicator of cytokinesis protein 9 isoform X2"/>
    <property type="match status" value="1"/>
</dbReference>
<dbReference type="Gene3D" id="1.20.58.740">
    <property type="match status" value="1"/>
</dbReference>
<dbReference type="Gene3D" id="1.25.40.410">
    <property type="match status" value="1"/>
</dbReference>
<dbReference type="Gene3D" id="2.60.40.150">
    <property type="entry name" value="C2 domain"/>
    <property type="match status" value="1"/>
</dbReference>
<dbReference type="Gene3D" id="2.30.29.30">
    <property type="entry name" value="Pleckstrin-homology domain (PH domain)/Phosphotyrosine-binding domain (PTB)"/>
    <property type="match status" value="1"/>
</dbReference>
<dbReference type="InterPro" id="IPR016024">
    <property type="entry name" value="ARM-type_fold"/>
</dbReference>
<dbReference type="InterPro" id="IPR037809">
    <property type="entry name" value="C2_Dock-D"/>
</dbReference>
<dbReference type="InterPro" id="IPR027007">
    <property type="entry name" value="C2_DOCK-type_domain"/>
</dbReference>
<dbReference type="InterPro" id="IPR035892">
    <property type="entry name" value="C2_domain_sf"/>
</dbReference>
<dbReference type="InterPro" id="IPR026791">
    <property type="entry name" value="DOCK"/>
</dbReference>
<dbReference type="InterPro" id="IPR021816">
    <property type="entry name" value="DOCK_C/D_N"/>
</dbReference>
<dbReference type="InterPro" id="IPR043161">
    <property type="entry name" value="DOCK_C_lobe_A"/>
</dbReference>
<dbReference type="InterPro" id="IPR043162">
    <property type="entry name" value="DOCK_C_lobe_C"/>
</dbReference>
<dbReference type="InterPro" id="IPR027357">
    <property type="entry name" value="DOCKER_dom"/>
</dbReference>
<dbReference type="InterPro" id="IPR046769">
    <property type="entry name" value="DOCKER_Lobe_A"/>
</dbReference>
<dbReference type="InterPro" id="IPR046770">
    <property type="entry name" value="DOCKER_Lobe_B"/>
</dbReference>
<dbReference type="InterPro" id="IPR046773">
    <property type="entry name" value="DOCKER_Lobe_C"/>
</dbReference>
<dbReference type="InterPro" id="IPR011993">
    <property type="entry name" value="PH-like_dom_sf"/>
</dbReference>
<dbReference type="InterPro" id="IPR001849">
    <property type="entry name" value="PH_domain"/>
</dbReference>
<dbReference type="PANTHER" id="PTHR23317">
    <property type="entry name" value="DEDICATOR OF CYTOKINESIS DOCK"/>
    <property type="match status" value="1"/>
</dbReference>
<dbReference type="PANTHER" id="PTHR23317:SF81">
    <property type="entry name" value="DEDICATOR OF CYTOKINESIS PROTEIN 11"/>
    <property type="match status" value="1"/>
</dbReference>
<dbReference type="Pfam" id="PF06920">
    <property type="entry name" value="DHR-2_Lobe_A"/>
    <property type="match status" value="1"/>
</dbReference>
<dbReference type="Pfam" id="PF20422">
    <property type="entry name" value="DHR-2_Lobe_B"/>
    <property type="match status" value="1"/>
</dbReference>
<dbReference type="Pfam" id="PF20421">
    <property type="entry name" value="DHR-2_Lobe_C"/>
    <property type="match status" value="1"/>
</dbReference>
<dbReference type="Pfam" id="PF14429">
    <property type="entry name" value="DOCK-C2"/>
    <property type="match status" value="1"/>
</dbReference>
<dbReference type="Pfam" id="PF11878">
    <property type="entry name" value="DOCK_C-D_N"/>
    <property type="match status" value="1"/>
</dbReference>
<dbReference type="Pfam" id="PF00169">
    <property type="entry name" value="PH"/>
    <property type="match status" value="1"/>
</dbReference>
<dbReference type="SMART" id="SM00233">
    <property type="entry name" value="PH"/>
    <property type="match status" value="1"/>
</dbReference>
<dbReference type="SUPFAM" id="SSF48371">
    <property type="entry name" value="ARM repeat"/>
    <property type="match status" value="1"/>
</dbReference>
<dbReference type="SUPFAM" id="SSF50729">
    <property type="entry name" value="PH domain-like"/>
    <property type="match status" value="1"/>
</dbReference>
<dbReference type="PROSITE" id="PS51650">
    <property type="entry name" value="C2_DOCK"/>
    <property type="match status" value="1"/>
</dbReference>
<dbReference type="PROSITE" id="PS51651">
    <property type="entry name" value="DOCKER"/>
    <property type="match status" value="1"/>
</dbReference>
<dbReference type="PROSITE" id="PS50003">
    <property type="entry name" value="PH_DOMAIN"/>
    <property type="match status" value="1"/>
</dbReference>
<comment type="function">
    <text evidence="6 7 8 9 10">Guanine nucleotide-exchange factor (GEF) that activates CDC42 by exchanging bound GDP for free GTP (PubMed:15710388, PubMed:16968698, PubMed:25851601). Required for marginal zone (MZ) B-cell development, is associated with early bone marrow B-cell development, MZ B-cell formation, MZ B-cell number and marginal metallophilic macrophages morphology (PubMed:25729399). Facilitates filopodia formation through the activation of CDC42 (PubMed:22494997).</text>
</comment>
<comment type="subunit">
    <text evidence="6 7">Interacts with CDC42.</text>
</comment>
<comment type="tissue specificity">
    <text evidence="6 8 9 10">Expressed in spleen, thymus, mesenteric lymph nodes (MLN), bone marrow and peripheral blood lymphocytes. Enriched in B-cells from germinal centers. Expressed in B-, T- and dendritic cells as well as Purkinje cells (PubMed:22494997, PubMed:25851601).</text>
</comment>
<comment type="developmental stage">
    <text evidence="8">In spleen, expression is down-regulated in aged mice.</text>
</comment>
<comment type="induction">
    <text evidence="8">In dendritic cells, the expression is up-regulated by LPS and anti-Fc-gamma receptor.</text>
</comment>
<comment type="domain">
    <text evidence="6 7 10">The DOCKER domain is necessary for the GEF activity (PubMed:15710388, PubMed:25851601). The DOCKER domain mediates interaction with activated CDC42 in conjunction with residues 66-126 (PubMed:16968698).</text>
</comment>
<comment type="disruption phenotype">
    <text evidence="9">Knockout mice are viable and fertile (PubMed:25729399). They have higher percentage of early bone marrow B-cells, but a reduced fraction of marginal zone B-cells. Their percentage of thymic CD4(+) T-cells is increased and they show an altered of morphologymarginal metallophilic macrophages (PubMed:25729399).</text>
</comment>
<comment type="miscellaneous">
    <text evidence="12">'Zizim' means 'spike' in Hebrew.</text>
</comment>
<comment type="similarity">
    <text evidence="3">Belongs to the DOCK family.</text>
</comment>
<protein>
    <recommendedName>
        <fullName evidence="13">Dedicator of cytokinesis protein 11</fullName>
    </recommendedName>
    <alternativeName>
        <fullName>Activated Cdc42-associated guanine nucleotide exchange factor</fullName>
        <shortName>ACG</shortName>
    </alternativeName>
    <alternativeName>
        <fullName evidence="11">Zizimin-2</fullName>
    </alternativeName>
</protein>
<organism>
    <name type="scientific">Mus musculus</name>
    <name type="common">Mouse</name>
    <dbReference type="NCBI Taxonomy" id="10090"/>
    <lineage>
        <taxon>Eukaryota</taxon>
        <taxon>Metazoa</taxon>
        <taxon>Chordata</taxon>
        <taxon>Craniata</taxon>
        <taxon>Vertebrata</taxon>
        <taxon>Euteleostomi</taxon>
        <taxon>Mammalia</taxon>
        <taxon>Eutheria</taxon>
        <taxon>Euarchontoglires</taxon>
        <taxon>Glires</taxon>
        <taxon>Rodentia</taxon>
        <taxon>Myomorpha</taxon>
        <taxon>Muroidea</taxon>
        <taxon>Muridae</taxon>
        <taxon>Murinae</taxon>
        <taxon>Mus</taxon>
        <taxon>Mus</taxon>
    </lineage>
</organism>
<evidence type="ECO:0000250" key="1">
    <source>
        <dbReference type="UniProtKB" id="Q5JSL3"/>
    </source>
</evidence>
<evidence type="ECO:0000255" key="2">
    <source>
        <dbReference type="PROSITE-ProRule" id="PRU00145"/>
    </source>
</evidence>
<evidence type="ECO:0000255" key="3">
    <source>
        <dbReference type="PROSITE-ProRule" id="PRU00983"/>
    </source>
</evidence>
<evidence type="ECO:0000255" key="4">
    <source>
        <dbReference type="PROSITE-ProRule" id="PRU00984"/>
    </source>
</evidence>
<evidence type="ECO:0000256" key="5">
    <source>
        <dbReference type="SAM" id="MobiDB-lite"/>
    </source>
</evidence>
<evidence type="ECO:0000269" key="6">
    <source>
    </source>
</evidence>
<evidence type="ECO:0000269" key="7">
    <source>
    </source>
</evidence>
<evidence type="ECO:0000269" key="8">
    <source>
    </source>
</evidence>
<evidence type="ECO:0000269" key="9">
    <source>
    </source>
</evidence>
<evidence type="ECO:0000269" key="10">
    <source>
    </source>
</evidence>
<evidence type="ECO:0000303" key="11">
    <source>
    </source>
</evidence>
<evidence type="ECO:0000305" key="12"/>
<evidence type="ECO:0000312" key="13">
    <source>
        <dbReference type="MGI" id="MGI:1923224"/>
    </source>
</evidence>
<evidence type="ECO:0007744" key="14">
    <source>
    </source>
</evidence>
<gene>
    <name evidence="13" type="primary">Dock11</name>
    <name evidence="11" type="synonym">Ziz2</name>
</gene>
<proteinExistence type="evidence at protein level"/>
<name>DOC11_MOUSE</name>
<sequence length="2073" mass="237771">MAEVRKFTKRLSKPGTAAELRQSVSEAVRGSVVLEKAKLVEPLDYENVITQRKTQIYSDPLRDLLMFPMEDISISVIGRQRRTVQSTVPEDAEKRAQSLFVKECIKTYSTDWHVVNYKYEDFSGDFRMLPCKSLRPEKIPNHVFEIDEDCEKDEDSSSLCSQKGGVIKQGWLHKANVNSTITVTMKVFKRRYFYLTQLPDGSYILNSYKDEKNSKESKGCIYLDACIDVVQCPKMRRHAFELKMLDKYSHYLAAETEQEMEEWLIMLKKIIQINTDSLVQEKKDTVEAIQEEETSSQGKAENIMASLERSMHPELMKYGRETEQLNKLSRGDGRQNLFSFDSEVQRLDFSGIEPDVKPFEEKCNKRFMVNCHDLTFNILGHIGDNAKGPPTNVEPFFINLALFDVKNNCKISADFHVDLNPPSVREMLWGTSTQLSNDGNAKGFSPESLIHGIAESQLCYIKQGIFSVTNPHPEIFLVVRIEKVLQGNITHCAEPYIKNSDPIKTAQKVHRTAKQVCSRLGQYRMPFAWAARPIFKDVQGSLDLDGRFSPLYKQDSSKLSNEDILKLLSEYKKPEKTKLQIIPGQLSITVECVPVDLPNCITSSYVPLKPFEKNCQNITVEVEEFVPEMTKYCYPFTIYKNHLYVYPLQLKYDSQKSFAKARNIAVCVEFRDSDESDASALKCIYGKPAGSVFTTNAYAVVSHHNQNPEFYDEIKIELPIHLHQKHHLLFTFYHVSCEINTKGTTKKQDTVETPVGFAWVPLLKDGRVITLEQQLPVSANLPPGYLNVNDAESRRQSNADIKWVDGAKPLLKIKTHLESTIYTQDLHVHKFFHHCQLIQSGSKEVPGELIKYLKCLHAMEIQVMIQFLPVILMQLFRVLTNMTHEDDVPINCTMVLLHIVSKCHEEGLESYLRSFIKYSFRPEKPSTLQAQLIHETLATTMIAILKQSADFLAINKLLKYSWFFFEIIAKSMATYLLEENKIKLPRGQRFPEAYHHVLHSLLLAIIPHVTIRYAEIPDESRNGNYSLASFLKRCLTLMDRGFVFNLINDYISGFSPKDPKVLAEYKFEFLQTICNHEHYIPLNLPMAFAKPKLQRVQDSNLEYSLSDEYCKHHFLVGLLLRETSIALQDNYEIRYTAISVIKNLLIKHAFDTRYQHKNQQAKIAQLYLPFVGLLLENIQRLAGRDTLYSCAAMPSSASRDEFPCGFVSPTNRGSLASDKDTAYGSFQNGHGIKREDSRGSLIPEGATGFPDPGSTSENTRQSSSRSSVSQYNRLDQYEIRNLLMCYLYIVKMISEDTLLTYWNKVSPQELINILVLLEVCLFHFRYMGKRNIARVHDAWLSKHFGIDRKSQTMPALRNRSGVMQARLQHLSSLESSFTLNHSSATTEADIFHQALLEGNTATEVSLTVLDTISFFTQCFKNQLLNNDGHNPLMKKVFDIHLAFLKNGQSEVSLKHVFASLRSFISKFPSAFFKGRVNMCAAFCYEVLKCCTSKISSTRNEASALLYLLMRNNFEYTKRKTFLRTHLQIIIAVSQLIADVALSGGSRFQESLFIINNFANSDRPMKATAFPTEVKDLTKRIRTVLMATAQMKEHEKDPEMLIDLQYSLAKSYASTPELRKTWLDSMAKIHIKNGDFSEAAMCYVHVAALVAEFLHRKKLFPSGCSAFKKITPNIDEEGAMKEDAGMMDVHYSEEVLLELLEQCVDGLWKAERYEVISEISKLIIPIYEKRREFEKLTQVYRTLHGAYTKILEVMHTKKRLLGTFFRVAFYGQSFFEEEDGKEYIYKEPKLTGLSEISLRLVKLYGEKFGTENVKIIQDSDKVNAKELDPKFAHIQVTYVKPYFDDKELTERKTEFERNHNINRFVFEAPYTLSGKKQGCIEEQCKRRTILTTSNSFPYVKKRIPINCEQQVNLKPIDVATDEIKDKTAELHKLCSSVDVDMIQLQLKLQGCVSVQVNAGPLAYARAFLNESQANKYPPKKVNELKDMFRKFIQACSIALELNERLIKEDQIEYHEGLKSNFRDMVKELSDIIHEQILQEDTMHSPWMNNTLHVFCAISGTSSNRGYGSPRYAEV</sequence>
<accession>A2AF47</accession>
<accession>Q5KTP7</accession>
<keyword id="KW-0344">Guanine-nucleotide releasing factor</keyword>
<keyword id="KW-0597">Phosphoprotein</keyword>
<keyword id="KW-1185">Reference proteome</keyword>
<reference key="1">
    <citation type="journal article" date="2005" name="FEBS Lett.">
        <title>Zizimin2: a novel, DOCK180-related Cdc42 guanine nucleotide exchange factor expressed predominantly in lymphocytes.</title>
        <authorList>
            <person name="Nishikimi A."/>
            <person name="Meller N."/>
            <person name="Uekawa N."/>
            <person name="Isobe K."/>
            <person name="Schwartz M.A."/>
            <person name="Maruyama M."/>
        </authorList>
    </citation>
    <scope>NUCLEOTIDE SEQUENCE [MRNA]</scope>
    <scope>INTERACTION WITH CDC42</scope>
    <scope>TISSUE SPECIFICITY</scope>
    <scope>FUNCTION</scope>
    <scope>DOMAIN</scope>
    <source>
        <tissue>Spleen</tissue>
    </source>
</reference>
<reference key="2">
    <citation type="journal article" date="2009" name="PLoS Biol.">
        <title>Lineage-specific biology revealed by a finished genome assembly of the mouse.</title>
        <authorList>
            <person name="Church D.M."/>
            <person name="Goodstadt L."/>
            <person name="Hillier L.W."/>
            <person name="Zody M.C."/>
            <person name="Goldstein S."/>
            <person name="She X."/>
            <person name="Bult C.J."/>
            <person name="Agarwala R."/>
            <person name="Cherry J.L."/>
            <person name="DiCuccio M."/>
            <person name="Hlavina W."/>
            <person name="Kapustin Y."/>
            <person name="Meric P."/>
            <person name="Maglott D."/>
            <person name="Birtle Z."/>
            <person name="Marques A.C."/>
            <person name="Graves T."/>
            <person name="Zhou S."/>
            <person name="Teague B."/>
            <person name="Potamousis K."/>
            <person name="Churas C."/>
            <person name="Place M."/>
            <person name="Herschleb J."/>
            <person name="Runnheim R."/>
            <person name="Forrest D."/>
            <person name="Amos-Landgraf J."/>
            <person name="Schwartz D.C."/>
            <person name="Cheng Z."/>
            <person name="Lindblad-Toh K."/>
            <person name="Eichler E.E."/>
            <person name="Ponting C.P."/>
        </authorList>
    </citation>
    <scope>NUCLEOTIDE SEQUENCE [LARGE SCALE GENOMIC DNA]</scope>
    <source>
        <strain>C57BL/6J</strain>
    </source>
</reference>
<reference key="3">
    <citation type="journal article" date="2006" name="J. Biol. Chem.">
        <title>Identification of a DOCK180-related guanine nucleotide exchange factor that is capable of mediating a positive feedback activation of Cdc42.</title>
        <authorList>
            <person name="Lin Q."/>
            <person name="Yang W."/>
            <person name="Baird D."/>
            <person name="Feng Q."/>
            <person name="Cerione R.A."/>
        </authorList>
    </citation>
    <scope>IDENTIFICATION BY MASS SPECTROMETRY</scope>
    <scope>INTERACTION WITH CDC42</scope>
    <scope>FUNCTION</scope>
    <scope>DOMAIN</scope>
</reference>
<reference key="4">
    <citation type="journal article" date="2007" name="Proc. Natl. Acad. Sci. U.S.A.">
        <title>Large-scale phosphorylation analysis of mouse liver.</title>
        <authorList>
            <person name="Villen J."/>
            <person name="Beausoleil S.A."/>
            <person name="Gerber S.A."/>
            <person name="Gygi S.P."/>
        </authorList>
    </citation>
    <scope>IDENTIFICATION BY MASS SPECTROMETRY [LARGE SCALE ANALYSIS]</scope>
    <source>
        <tissue>Liver</tissue>
    </source>
</reference>
<reference key="5">
    <citation type="journal article" date="2010" name="Cell">
        <title>A tissue-specific atlas of mouse protein phosphorylation and expression.</title>
        <authorList>
            <person name="Huttlin E.L."/>
            <person name="Jedrychowski M.P."/>
            <person name="Elias J.E."/>
            <person name="Goswami T."/>
            <person name="Rad R."/>
            <person name="Beausoleil S.A."/>
            <person name="Villen J."/>
            <person name="Haas W."/>
            <person name="Sowa M.E."/>
            <person name="Gygi S.P."/>
        </authorList>
    </citation>
    <scope>PHOSPHORYLATION [LARGE SCALE ANALYSIS] AT SER-445</scope>
    <scope>IDENTIFICATION BY MASS SPECTROMETRY [LARGE SCALE ANALYSIS]</scope>
    <source>
        <tissue>Brain</tissue>
        <tissue>Lung</tissue>
        <tissue>Pancreas</tissue>
        <tissue>Spleen</tissue>
        <tissue>Testis</tissue>
    </source>
</reference>
<reference key="6">
    <citation type="journal article" date="2012" name="Immun. Ageing">
        <title>Age-related guanine nucleotide exchange factor, mouse Zizimin2, induces filopodia in bone marrow-derived dendritic cells.</title>
        <authorList>
            <person name="Sakabe I."/>
            <person name="Asai A."/>
            <person name="Iijima J."/>
            <person name="Maruyama M."/>
        </authorList>
    </citation>
    <scope>FUNCTION</scope>
    <scope>TISSUE SPECIFICITY</scope>
    <scope>DEVELOPMENTAL STAGE</scope>
    <scope>INDUCTION BY LPS</scope>
</reference>
<reference key="7">
    <citation type="journal article" date="2015" name="Immun. Ageing">
        <title>The immunosenescence-related gene Zizimin2 is associated with early bone marrow B cell development and marginal zone B cell formation.</title>
        <authorList>
            <person name="Matsuda T."/>
            <person name="Yanase S."/>
            <person name="Takaoka A."/>
            <person name="Maruyama M."/>
        </authorList>
    </citation>
    <scope>FUNCTION</scope>
    <scope>DISRUPTION PHENOTYPE</scope>
    <scope>TISSUE SPECIFICITY</scope>
</reference>
<reference key="8">
    <citation type="journal article" date="2015" name="Mol. Biol. Cell">
        <title>The RhoGEF DOCK10 is essential for dendritic spine morphogenesis.</title>
        <authorList>
            <person name="Jaudon F."/>
            <person name="Raynaud F."/>
            <person name="Wehrle R."/>
            <person name="Bellanger J.M."/>
            <person name="Doulazmi M."/>
            <person name="Vodjdani G."/>
            <person name="Gasman S."/>
            <person name="Fagni L."/>
            <person name="Dusart I."/>
            <person name="Debant A."/>
            <person name="Schmidt S."/>
        </authorList>
    </citation>
    <scope>FUNCTION</scope>
    <scope>TISSUE SPECIFICITY</scope>
    <scope>DOMAIN</scope>
</reference>